<accession>B4TGX9</accession>
<name>DNAT_SALHS</name>
<keyword id="KW-0235">DNA replication</keyword>
<keyword id="KW-0238">DNA-binding</keyword>
<keyword id="KW-0639">Primosome</keyword>
<comment type="function">
    <text evidence="1">Involved in the restart of stalled replication forks, which reloads the replicative helicase on sites other than the origin of replication. Can function in multiple replication restart pathways. Displaces ssDNA from a PriB-ssDNA complex. Probably forms a spiral filament on ssDNA.</text>
</comment>
<comment type="subunit">
    <text evidence="1">Homooligomerizes. Interacts with PriB. Component of the replication restart primosome. Primosome assembly occurs via a 'hand-off' mechanism. PriA binds to replication forks, subsequently PriB then DnaT bind; DnaT then displaces ssDNA to generate the helicase loading substrate.</text>
</comment>
<comment type="similarity">
    <text evidence="1">Belongs to the DnaT family.</text>
</comment>
<organism>
    <name type="scientific">Salmonella heidelberg (strain SL476)</name>
    <dbReference type="NCBI Taxonomy" id="454169"/>
    <lineage>
        <taxon>Bacteria</taxon>
        <taxon>Pseudomonadati</taxon>
        <taxon>Pseudomonadota</taxon>
        <taxon>Gammaproteobacteria</taxon>
        <taxon>Enterobacterales</taxon>
        <taxon>Enterobacteriaceae</taxon>
        <taxon>Salmonella</taxon>
    </lineage>
</organism>
<feature type="chain" id="PRO_1000136441" description="Replication restart protein DnaT">
    <location>
        <begin position="1"/>
        <end position="179"/>
    </location>
</feature>
<feature type="region of interest" description="Disordered" evidence="2">
    <location>
        <begin position="151"/>
        <end position="179"/>
    </location>
</feature>
<feature type="compositionally biased region" description="Polar residues" evidence="2">
    <location>
        <begin position="151"/>
        <end position="168"/>
    </location>
</feature>
<evidence type="ECO:0000255" key="1">
    <source>
        <dbReference type="HAMAP-Rule" id="MF_01061"/>
    </source>
</evidence>
<evidence type="ECO:0000256" key="2">
    <source>
        <dbReference type="SAM" id="MobiDB-lite"/>
    </source>
</evidence>
<proteinExistence type="inferred from homology"/>
<reference key="1">
    <citation type="journal article" date="2011" name="J. Bacteriol.">
        <title>Comparative genomics of 28 Salmonella enterica isolates: evidence for CRISPR-mediated adaptive sublineage evolution.</title>
        <authorList>
            <person name="Fricke W.F."/>
            <person name="Mammel M.K."/>
            <person name="McDermott P.F."/>
            <person name="Tartera C."/>
            <person name="White D.G."/>
            <person name="Leclerc J.E."/>
            <person name="Ravel J."/>
            <person name="Cebula T.A."/>
        </authorList>
    </citation>
    <scope>NUCLEOTIDE SEQUENCE [LARGE SCALE GENOMIC DNA]</scope>
    <source>
        <strain>SL476</strain>
    </source>
</reference>
<sequence length="179" mass="19506">MSSRILTSDVIGIDVLLHDHHAVLAKSTGGAVAVFANNAPAFYAVTPARMAELLALEEKLSRPGSDVALDAQFYEEPEAAPVAIPCGKFAMYPAWQPDADFQRQAALWGVALREPVTAEELAAFIAYWQAEGKVFHHIQWQQKLARSVQISRSSNGGMPQRDINSVSEPDNHIPPGFRG</sequence>
<protein>
    <recommendedName>
        <fullName evidence="1">Replication restart protein DnaT</fullName>
    </recommendedName>
</protein>
<dbReference type="EMBL" id="CP001120">
    <property type="protein sequence ID" value="ACF66225.1"/>
    <property type="molecule type" value="Genomic_DNA"/>
</dbReference>
<dbReference type="RefSeq" id="WP_000098578.1">
    <property type="nucleotide sequence ID" value="NC_011083.1"/>
</dbReference>
<dbReference type="SMR" id="B4TGX9"/>
<dbReference type="KEGG" id="seh:SeHA_C4952"/>
<dbReference type="HOGENOM" id="CLU_1501592_0_0_6"/>
<dbReference type="Proteomes" id="UP000001866">
    <property type="component" value="Chromosome"/>
</dbReference>
<dbReference type="GO" id="GO:1990077">
    <property type="term" value="C:primosome complex"/>
    <property type="evidence" value="ECO:0007669"/>
    <property type="project" value="UniProtKB-KW"/>
</dbReference>
<dbReference type="GO" id="GO:0006269">
    <property type="term" value="P:DNA replication, synthesis of primer"/>
    <property type="evidence" value="ECO:0007669"/>
    <property type="project" value="UniProtKB-UniRule"/>
</dbReference>
<dbReference type="Gene3D" id="1.10.8.1180">
    <property type="match status" value="1"/>
</dbReference>
<dbReference type="HAMAP" id="MF_01061">
    <property type="entry name" value="DnaT"/>
    <property type="match status" value="1"/>
</dbReference>
<dbReference type="InterPro" id="IPR020917">
    <property type="entry name" value="DnaT"/>
</dbReference>
<dbReference type="InterPro" id="IPR040480">
    <property type="entry name" value="DnaT_DNA_bind"/>
</dbReference>
<dbReference type="NCBIfam" id="NF002770">
    <property type="entry name" value="PRK02854.1"/>
    <property type="match status" value="1"/>
</dbReference>
<dbReference type="Pfam" id="PF17948">
    <property type="entry name" value="DnaT"/>
    <property type="match status" value="1"/>
</dbReference>
<gene>
    <name evidence="1" type="primary">dnaT</name>
    <name type="ordered locus">SeHA_C4952</name>
</gene>